<dbReference type="EMBL" id="AF193857">
    <property type="protein sequence ID" value="AAF05771.1"/>
    <property type="molecule type" value="mRNA"/>
</dbReference>
<dbReference type="EMBL" id="AAFI02000130">
    <property type="protein sequence ID" value="EAL62857.1"/>
    <property type="molecule type" value="Genomic_DNA"/>
</dbReference>
<dbReference type="RefSeq" id="XP_636360.1">
    <property type="nucleotide sequence ID" value="XM_631268.1"/>
</dbReference>
<dbReference type="SMR" id="Q9U641"/>
<dbReference type="FunCoup" id="Q9U641">
    <property type="interactions" value="23"/>
</dbReference>
<dbReference type="STRING" id="44689.Q9U641"/>
<dbReference type="PaxDb" id="44689-DDB0191095"/>
<dbReference type="EnsemblProtists" id="EAL62857">
    <property type="protein sequence ID" value="EAL62857"/>
    <property type="gene ID" value="DDB_G0289157"/>
</dbReference>
<dbReference type="GeneID" id="8626989"/>
<dbReference type="KEGG" id="ddi:DDB_G0289157"/>
<dbReference type="dictyBase" id="DDB_G0289157">
    <property type="gene designation" value="cmfB"/>
</dbReference>
<dbReference type="VEuPathDB" id="AmoebaDB:DDB_G0289157"/>
<dbReference type="eggNOG" id="ENOG502RST9">
    <property type="taxonomic scope" value="Eukaryota"/>
</dbReference>
<dbReference type="HOGENOM" id="CLU_024648_5_2_1"/>
<dbReference type="InParanoid" id="Q9U641"/>
<dbReference type="OMA" id="VWYWLIP"/>
<dbReference type="PhylomeDB" id="Q9U641"/>
<dbReference type="PRO" id="PR:Q9U641"/>
<dbReference type="Proteomes" id="UP000002195">
    <property type="component" value="Chromosome 5"/>
</dbReference>
<dbReference type="GO" id="GO:0016020">
    <property type="term" value="C:membrane"/>
    <property type="evidence" value="ECO:0007669"/>
    <property type="project" value="UniProtKB-SubCell"/>
</dbReference>
<dbReference type="GO" id="GO:0071949">
    <property type="term" value="F:FAD binding"/>
    <property type="evidence" value="ECO:0007669"/>
    <property type="project" value="InterPro"/>
</dbReference>
<dbReference type="Gene3D" id="3.50.50.60">
    <property type="entry name" value="FAD/NAD(P)-binding domain"/>
    <property type="match status" value="1"/>
</dbReference>
<dbReference type="InterPro" id="IPR002938">
    <property type="entry name" value="FAD-bd"/>
</dbReference>
<dbReference type="InterPro" id="IPR036188">
    <property type="entry name" value="FAD/NAD-bd_sf"/>
</dbReference>
<dbReference type="InterPro" id="IPR050407">
    <property type="entry name" value="Geranylgeranyl_reductase"/>
</dbReference>
<dbReference type="PANTHER" id="PTHR42685:SF22">
    <property type="entry name" value="CONDITIONED MEDIUM FACTOR RECEPTOR 1"/>
    <property type="match status" value="1"/>
</dbReference>
<dbReference type="PANTHER" id="PTHR42685">
    <property type="entry name" value="GERANYLGERANYL DIPHOSPHATE REDUCTASE"/>
    <property type="match status" value="1"/>
</dbReference>
<dbReference type="Pfam" id="PF01494">
    <property type="entry name" value="FAD_binding_3"/>
    <property type="match status" value="1"/>
</dbReference>
<dbReference type="PRINTS" id="PR00420">
    <property type="entry name" value="RNGMNOXGNASE"/>
</dbReference>
<dbReference type="SUPFAM" id="SSF51905">
    <property type="entry name" value="FAD/NAD(P)-binding domain"/>
    <property type="match status" value="1"/>
</dbReference>
<gene>
    <name type="primary">cmfB</name>
    <name type="synonym">cmfr1</name>
    <name type="ORF">DDB_G0289157</name>
</gene>
<accession>Q9U641</accession>
<accession>Q54HX4</accession>
<protein>
    <recommendedName>
        <fullName>Conditioned medium factor receptor 1</fullName>
    </recommendedName>
</protein>
<proteinExistence type="evidence at protein level"/>
<reference key="1">
    <citation type="journal article" date="1999" name="J. Biol. Chem.">
        <title>A putative receptor mediating cell-density sensing in Dictyostelium.</title>
        <authorList>
            <person name="Deery W.J."/>
            <person name="Gomer R.H."/>
        </authorList>
    </citation>
    <scope>NUCLEOTIDE SEQUENCE [MRNA]</scope>
    <scope>DISRUPTION PHENOTYPE</scope>
    <scope>SUBCELLULAR LOCATION</scope>
    <scope>PROTEIN SEQUENCE OF 57-81; 141-154 AND 417-425</scope>
    <scope>DEVELOPMENTAL STAGE</scope>
    <scope>FUNCTION</scope>
    <scope>TOPOLOGY</scope>
</reference>
<reference key="2">
    <citation type="journal article" date="2005" name="Nature">
        <title>The genome of the social amoeba Dictyostelium discoideum.</title>
        <authorList>
            <person name="Eichinger L."/>
            <person name="Pachebat J.A."/>
            <person name="Gloeckner G."/>
            <person name="Rajandream M.A."/>
            <person name="Sucgang R."/>
            <person name="Berriman M."/>
            <person name="Song J."/>
            <person name="Olsen R."/>
            <person name="Szafranski K."/>
            <person name="Xu Q."/>
            <person name="Tunggal B."/>
            <person name="Kummerfeld S."/>
            <person name="Madera M."/>
            <person name="Konfortov B.A."/>
            <person name="Rivero F."/>
            <person name="Bankier A.T."/>
            <person name="Lehmann R."/>
            <person name="Hamlin N."/>
            <person name="Davies R."/>
            <person name="Gaudet P."/>
            <person name="Fey P."/>
            <person name="Pilcher K."/>
            <person name="Chen G."/>
            <person name="Saunders D."/>
            <person name="Sodergren E.J."/>
            <person name="Davis P."/>
            <person name="Kerhornou A."/>
            <person name="Nie X."/>
            <person name="Hall N."/>
            <person name="Anjard C."/>
            <person name="Hemphill L."/>
            <person name="Bason N."/>
            <person name="Farbrother P."/>
            <person name="Desany B."/>
            <person name="Just E."/>
            <person name="Morio T."/>
            <person name="Rost R."/>
            <person name="Churcher C.M."/>
            <person name="Cooper J."/>
            <person name="Haydock S."/>
            <person name="van Driessche N."/>
            <person name="Cronin A."/>
            <person name="Goodhead I."/>
            <person name="Muzny D.M."/>
            <person name="Mourier T."/>
            <person name="Pain A."/>
            <person name="Lu M."/>
            <person name="Harper D."/>
            <person name="Lindsay R."/>
            <person name="Hauser H."/>
            <person name="James K.D."/>
            <person name="Quiles M."/>
            <person name="Madan Babu M."/>
            <person name="Saito T."/>
            <person name="Buchrieser C."/>
            <person name="Wardroper A."/>
            <person name="Felder M."/>
            <person name="Thangavelu M."/>
            <person name="Johnson D."/>
            <person name="Knights A."/>
            <person name="Loulseged H."/>
            <person name="Mungall K.L."/>
            <person name="Oliver K."/>
            <person name="Price C."/>
            <person name="Quail M.A."/>
            <person name="Urushihara H."/>
            <person name="Hernandez J."/>
            <person name="Rabbinowitsch E."/>
            <person name="Steffen D."/>
            <person name="Sanders M."/>
            <person name="Ma J."/>
            <person name="Kohara Y."/>
            <person name="Sharp S."/>
            <person name="Simmonds M.N."/>
            <person name="Spiegler S."/>
            <person name="Tivey A."/>
            <person name="Sugano S."/>
            <person name="White B."/>
            <person name="Walker D."/>
            <person name="Woodward J.R."/>
            <person name="Winckler T."/>
            <person name="Tanaka Y."/>
            <person name="Shaulsky G."/>
            <person name="Schleicher M."/>
            <person name="Weinstock G.M."/>
            <person name="Rosenthal A."/>
            <person name="Cox E.C."/>
            <person name="Chisholm R.L."/>
            <person name="Gibbs R.A."/>
            <person name="Loomis W.F."/>
            <person name="Platzer M."/>
            <person name="Kay R.R."/>
            <person name="Williams J.G."/>
            <person name="Dear P.H."/>
            <person name="Noegel A.A."/>
            <person name="Barrell B.G."/>
            <person name="Kuspa A."/>
        </authorList>
    </citation>
    <scope>NUCLEOTIDE SEQUENCE [LARGE SCALE GENOMIC DNA]</scope>
    <source>
        <strain>AX4</strain>
    </source>
</reference>
<reference key="3">
    <citation type="journal article" date="2002" name="J. Biol. Chem.">
        <title>A single cell density-sensing factor stimulates distinct signal transduction pathways through two different receptors.</title>
        <authorList>
            <person name="Deery W.J."/>
            <person name="Gao T."/>
            <person name="Ammann R."/>
            <person name="Gomer R.H."/>
        </authorList>
    </citation>
    <scope>TOPOLOGY</scope>
    <scope>FUNCTION</scope>
</reference>
<reference key="4">
    <citation type="journal article" date="2006" name="Cell. Microbiol.">
        <title>Dictyostelium transcriptional host cell response upon infection with Legionella.</title>
        <authorList>
            <person name="Farbrother P."/>
            <person name="Wagner C."/>
            <person name="Na J."/>
            <person name="Tunggal B."/>
            <person name="Morio T."/>
            <person name="Urushihara H."/>
            <person name="Tanaka Y."/>
            <person name="Schleicher M."/>
            <person name="Steinert M."/>
            <person name="Eichinger L."/>
        </authorList>
    </citation>
    <scope>IDENTIFICATION</scope>
</reference>
<reference key="5">
    <citation type="journal article" date="2006" name="Curr. Top. Dev. Biol.">
        <title>Signal relay during the life cycle of Dictyostelium.</title>
        <authorList>
            <person name="Mahadeo D.C."/>
            <person name="Parent C.A."/>
        </authorList>
    </citation>
    <scope>IDENTIFICATION</scope>
</reference>
<reference key="6">
    <citation type="journal article" date="2007" name="Curr. Biol.">
        <title>A G protein-coupled receptor with a lipid kinase domain is involved in cell-density sensing.</title>
        <authorList>
            <person name="Bakthavatsalam D."/>
            <person name="Brazill D."/>
            <person name="Gomer R.H."/>
            <person name="Eichinger L."/>
            <person name="Rivero F."/>
            <person name="Noegel A.A."/>
        </authorList>
    </citation>
    <scope>IDENTIFICATION</scope>
</reference>
<sequence length="510" mass="56497">MDSKYIQKTLSAITEQITKNAAVQKVLDNKFVKEHKYAAAAATVGLGVVAATTIVKAVNCEGKRYNYDAIPNLSFDDESIYDVATIGAGPSGSVLGYYLAREGRKVALLEKKVFPRDKYCGDAVATMAQDILREMGVMKELVDEDLGHFAQNGGFVSPNGNSFIGNSAKELKRDAKYNRGAVIAVKRIVLDEKVAKAAKRMGADLKENTTVENATFDRSTGVWTINCVDSEDNTKKIVYRARVLVCADGSPSNAARQLGYVHTEPNGICSRAYVKNNTTFRYDGVVFYPPSLLPGYCAIIREARDELNYLAYIIPGGKVTNDDLSKYHHQYMTEDPFISAALGPNPDIERMKAAPLRLGGIKKSYDDHLLIVGDAAGFIDPLTGEGIQYAMEGSRLASLALIQAFNERDLSHQSLKRYQDFWMAKFGHEFSMSMTMSLFLYRFPIVLDAAASLIEKRGSRFLAEWAAVMTGVKPKTWFLRPDVGPLIVLEIFGECFRRVFQGKKQIKKLD</sequence>
<organism>
    <name type="scientific">Dictyostelium discoideum</name>
    <name type="common">Social amoeba</name>
    <dbReference type="NCBI Taxonomy" id="44689"/>
    <lineage>
        <taxon>Eukaryota</taxon>
        <taxon>Amoebozoa</taxon>
        <taxon>Evosea</taxon>
        <taxon>Eumycetozoa</taxon>
        <taxon>Dictyostelia</taxon>
        <taxon>Dictyosteliales</taxon>
        <taxon>Dictyosteliaceae</taxon>
        <taxon>Dictyostelium</taxon>
    </lineage>
</organism>
<keyword id="KW-0903">Direct protein sequencing</keyword>
<keyword id="KW-0472">Membrane</keyword>
<keyword id="KW-0675">Receptor</keyword>
<keyword id="KW-1185">Reference proteome</keyword>
<keyword id="KW-0812">Transmembrane</keyword>
<keyword id="KW-1133">Transmembrane helix</keyword>
<name>CMFB_DICDI</name>
<feature type="chain" id="PRO_0000368226" description="Conditioned medium factor receptor 1">
    <location>
        <begin position="1"/>
        <end position="510"/>
    </location>
</feature>
<feature type="topological domain" description="Cytoplasmic" evidence="1">
    <location>
        <begin position="1"/>
        <end position="36"/>
    </location>
</feature>
<feature type="transmembrane region" description="Helical" evidence="1">
    <location>
        <begin position="37"/>
        <end position="55"/>
    </location>
</feature>
<feature type="topological domain" description="Extracellular" evidence="1">
    <location>
        <begin position="56"/>
        <end position="510"/>
    </location>
</feature>
<comment type="function">
    <text evidence="2 3">Receptor for cmfA, that appears to mediate the G-independent cmfA signal transduction.</text>
</comment>
<comment type="subcellular location">
    <subcellularLocation>
        <location evidence="4">Membrane</location>
        <topology evidence="4">Single-pass membrane protein</topology>
    </subcellularLocation>
</comment>
<comment type="developmental stage">
    <text evidence="2">Expressed in vegetative and early developing cells and then begin to disappear as the cells aggregate.</text>
</comment>
<comment type="disruption phenotype">
    <text evidence="2">Null cells show a 50% decrease of the CMF binding and a loss of CMF-induced G protein-independent gene expression.</text>
</comment>
<evidence type="ECO:0000255" key="1"/>
<evidence type="ECO:0000269" key="2">
    <source>
    </source>
</evidence>
<evidence type="ECO:0000269" key="3">
    <source>
    </source>
</evidence>
<evidence type="ECO:0000305" key="4"/>